<dbReference type="EMBL" id="AM295007">
    <property type="protein sequence ID" value="CAM29589.1"/>
    <property type="molecule type" value="Genomic_DNA"/>
</dbReference>
<dbReference type="RefSeq" id="WP_002982870.1">
    <property type="nucleotide sequence ID" value="NC_009332.1"/>
</dbReference>
<dbReference type="SMR" id="A2RCL6"/>
<dbReference type="GeneID" id="83705580"/>
<dbReference type="KEGG" id="spf:SpyM50247"/>
<dbReference type="HOGENOM" id="CLU_064548_7_1_9"/>
<dbReference type="GO" id="GO:1990904">
    <property type="term" value="C:ribonucleoprotein complex"/>
    <property type="evidence" value="ECO:0007669"/>
    <property type="project" value="UniProtKB-KW"/>
</dbReference>
<dbReference type="GO" id="GO:0005840">
    <property type="term" value="C:ribosome"/>
    <property type="evidence" value="ECO:0007669"/>
    <property type="project" value="UniProtKB-KW"/>
</dbReference>
<dbReference type="GO" id="GO:0003735">
    <property type="term" value="F:structural constituent of ribosome"/>
    <property type="evidence" value="ECO:0007669"/>
    <property type="project" value="InterPro"/>
</dbReference>
<dbReference type="GO" id="GO:0006412">
    <property type="term" value="P:translation"/>
    <property type="evidence" value="ECO:0007669"/>
    <property type="project" value="UniProtKB-UniRule"/>
</dbReference>
<dbReference type="Gene3D" id="2.30.170.40">
    <property type="entry name" value="Ribosomal protein L28/L24"/>
    <property type="match status" value="1"/>
</dbReference>
<dbReference type="HAMAP" id="MF_00373">
    <property type="entry name" value="Ribosomal_bL28"/>
    <property type="match status" value="1"/>
</dbReference>
<dbReference type="InterPro" id="IPR050096">
    <property type="entry name" value="Bacterial_rp_bL28"/>
</dbReference>
<dbReference type="InterPro" id="IPR026569">
    <property type="entry name" value="Ribosomal_bL28"/>
</dbReference>
<dbReference type="InterPro" id="IPR034704">
    <property type="entry name" value="Ribosomal_bL28/bL31-like_sf"/>
</dbReference>
<dbReference type="InterPro" id="IPR001383">
    <property type="entry name" value="Ribosomal_bL28_bact-type"/>
</dbReference>
<dbReference type="InterPro" id="IPR037147">
    <property type="entry name" value="Ribosomal_bL28_sf"/>
</dbReference>
<dbReference type="NCBIfam" id="TIGR00009">
    <property type="entry name" value="L28"/>
    <property type="match status" value="1"/>
</dbReference>
<dbReference type="PANTHER" id="PTHR39080">
    <property type="entry name" value="50S RIBOSOMAL PROTEIN L28"/>
    <property type="match status" value="1"/>
</dbReference>
<dbReference type="PANTHER" id="PTHR39080:SF1">
    <property type="entry name" value="LARGE RIBOSOMAL SUBUNIT PROTEIN BL28A"/>
    <property type="match status" value="1"/>
</dbReference>
<dbReference type="Pfam" id="PF00830">
    <property type="entry name" value="Ribosomal_L28"/>
    <property type="match status" value="1"/>
</dbReference>
<dbReference type="SUPFAM" id="SSF143800">
    <property type="entry name" value="L28p-like"/>
    <property type="match status" value="1"/>
</dbReference>
<evidence type="ECO:0000255" key="1">
    <source>
        <dbReference type="HAMAP-Rule" id="MF_00373"/>
    </source>
</evidence>
<evidence type="ECO:0000305" key="2"/>
<organism>
    <name type="scientific">Streptococcus pyogenes serotype M5 (strain Manfredo)</name>
    <dbReference type="NCBI Taxonomy" id="160491"/>
    <lineage>
        <taxon>Bacteria</taxon>
        <taxon>Bacillati</taxon>
        <taxon>Bacillota</taxon>
        <taxon>Bacilli</taxon>
        <taxon>Lactobacillales</taxon>
        <taxon>Streptococcaceae</taxon>
        <taxon>Streptococcus</taxon>
    </lineage>
</organism>
<sequence length="62" mass="6928">MAKVCYFTGRKTVSGNNRSHAMNQTKRTVKPNLQKVTILVDGKPKKVWASARALKSGKVERI</sequence>
<name>RL28_STRPG</name>
<keyword id="KW-0687">Ribonucleoprotein</keyword>
<keyword id="KW-0689">Ribosomal protein</keyword>
<feature type="chain" id="PRO_1000007374" description="Large ribosomal subunit protein bL28">
    <location>
        <begin position="1"/>
        <end position="62"/>
    </location>
</feature>
<accession>A2RCL6</accession>
<reference key="1">
    <citation type="journal article" date="2007" name="J. Bacteriol.">
        <title>Complete genome of acute rheumatic fever-associated serotype M5 Streptococcus pyogenes strain Manfredo.</title>
        <authorList>
            <person name="Holden M.T.G."/>
            <person name="Scott A."/>
            <person name="Cherevach I."/>
            <person name="Chillingworth T."/>
            <person name="Churcher C."/>
            <person name="Cronin A."/>
            <person name="Dowd L."/>
            <person name="Feltwell T."/>
            <person name="Hamlin N."/>
            <person name="Holroyd S."/>
            <person name="Jagels K."/>
            <person name="Moule S."/>
            <person name="Mungall K."/>
            <person name="Quail M.A."/>
            <person name="Price C."/>
            <person name="Rabbinowitsch E."/>
            <person name="Sharp S."/>
            <person name="Skelton J."/>
            <person name="Whitehead S."/>
            <person name="Barrell B.G."/>
            <person name="Kehoe M."/>
            <person name="Parkhill J."/>
        </authorList>
    </citation>
    <scope>NUCLEOTIDE SEQUENCE [LARGE SCALE GENOMIC DNA]</scope>
    <source>
        <strain>Manfredo</strain>
    </source>
</reference>
<proteinExistence type="inferred from homology"/>
<protein>
    <recommendedName>
        <fullName evidence="1">Large ribosomal subunit protein bL28</fullName>
    </recommendedName>
    <alternativeName>
        <fullName evidence="2">50S ribosomal protein L28</fullName>
    </alternativeName>
</protein>
<comment type="similarity">
    <text evidence="1">Belongs to the bacterial ribosomal protein bL28 family.</text>
</comment>
<gene>
    <name evidence="1" type="primary">rpmB</name>
    <name type="ordered locus">SpyM50247</name>
</gene>